<proteinExistence type="inferred from homology"/>
<gene>
    <name evidence="1" type="primary">maeA</name>
    <name type="ordered locus">SF1746</name>
    <name type="ordered locus">S1879</name>
</gene>
<protein>
    <recommendedName>
        <fullName evidence="1">NAD-dependent malic enzyme</fullName>
        <shortName evidence="1">NAD-ME</shortName>
        <ecNumber evidence="1">1.1.1.38</ecNumber>
    </recommendedName>
</protein>
<sequence>MEPKTKKQRSLYIPYAGPVLLEFPLLNKGSAFSMEERRNFNLLGLLPEVVETIEEQAERAWIQYQGFKTEIDKHIYLRNIQDTNETLFYRLVNNHLDEMMPVIYTPTVGAACERFSEIYRRSRGVFISYQNRHNMDDILQNVPNHNIKVIVVTDGERILGLGDQGIGGMGIPIGKLSLYTACGGISPAYTLPVVLDVGTNNQQLLNDPLYMGWRNPRITDDEYYEFVDEFIQAVKQRWPDVLLQFEDFAQKNAMPLLNRYRNEICSFNDDIQGTAAVTVGTLIAASRAAGGQLSEKKIVFLGAGSAGCGIAEMIIAQTQREGLSEEAARQKVFMVDRFGLLTDKMPNLLPFQTKLVQKRENLSDWDTDSDVLSLLDVVRNVKPDILIGVSGQTGLFTEEIIREMHKHCPRPIVMPLSNPTSRVEATPQDIIAWTEGNALVATGSPFNPVVWKDKIYPIAQCNNAFIFPGIGLGVIASGASRITDEMLMSASETLAQYSPLVLNGEGLVLPELKDIQKVSRAIAFAVGKMAQQQGVAVKTSAEALQQAIDDNFWQAEYRDYRRTSI</sequence>
<comment type="catalytic activity">
    <reaction evidence="1">
        <text>(S)-malate + NAD(+) = pyruvate + CO2 + NADH</text>
        <dbReference type="Rhea" id="RHEA:12653"/>
        <dbReference type="ChEBI" id="CHEBI:15361"/>
        <dbReference type="ChEBI" id="CHEBI:15589"/>
        <dbReference type="ChEBI" id="CHEBI:16526"/>
        <dbReference type="ChEBI" id="CHEBI:57540"/>
        <dbReference type="ChEBI" id="CHEBI:57945"/>
        <dbReference type="EC" id="1.1.1.38"/>
    </reaction>
</comment>
<comment type="catalytic activity">
    <reaction evidence="1">
        <text>oxaloacetate + H(+) = pyruvate + CO2</text>
        <dbReference type="Rhea" id="RHEA:15641"/>
        <dbReference type="ChEBI" id="CHEBI:15361"/>
        <dbReference type="ChEBI" id="CHEBI:15378"/>
        <dbReference type="ChEBI" id="CHEBI:16452"/>
        <dbReference type="ChEBI" id="CHEBI:16526"/>
        <dbReference type="EC" id="1.1.1.38"/>
    </reaction>
</comment>
<comment type="cofactor">
    <cofactor evidence="1">
        <name>Mg(2+)</name>
        <dbReference type="ChEBI" id="CHEBI:18420"/>
    </cofactor>
    <cofactor evidence="1">
        <name>Mn(2+)</name>
        <dbReference type="ChEBI" id="CHEBI:29035"/>
    </cofactor>
    <text evidence="1">Divalent metal cations. Prefers magnesium or manganese.</text>
</comment>
<comment type="subunit">
    <text evidence="1">Homotetramer.</text>
</comment>
<comment type="similarity">
    <text evidence="1">Belongs to the malic enzymes family.</text>
</comment>
<evidence type="ECO:0000255" key="1">
    <source>
        <dbReference type="HAMAP-Rule" id="MF_01619"/>
    </source>
</evidence>
<reference key="1">
    <citation type="journal article" date="2002" name="Nucleic Acids Res.">
        <title>Genome sequence of Shigella flexneri 2a: insights into pathogenicity through comparison with genomes of Escherichia coli K12 and O157.</title>
        <authorList>
            <person name="Jin Q."/>
            <person name="Yuan Z."/>
            <person name="Xu J."/>
            <person name="Wang Y."/>
            <person name="Shen Y."/>
            <person name="Lu W."/>
            <person name="Wang J."/>
            <person name="Liu H."/>
            <person name="Yang J."/>
            <person name="Yang F."/>
            <person name="Zhang X."/>
            <person name="Zhang J."/>
            <person name="Yang G."/>
            <person name="Wu H."/>
            <person name="Qu D."/>
            <person name="Dong J."/>
            <person name="Sun L."/>
            <person name="Xue Y."/>
            <person name="Zhao A."/>
            <person name="Gao Y."/>
            <person name="Zhu J."/>
            <person name="Kan B."/>
            <person name="Ding K."/>
            <person name="Chen S."/>
            <person name="Cheng H."/>
            <person name="Yao Z."/>
            <person name="He B."/>
            <person name="Chen R."/>
            <person name="Ma D."/>
            <person name="Qiang B."/>
            <person name="Wen Y."/>
            <person name="Hou Y."/>
            <person name="Yu J."/>
        </authorList>
    </citation>
    <scope>NUCLEOTIDE SEQUENCE [LARGE SCALE GENOMIC DNA]</scope>
    <source>
        <strain>301 / Serotype 2a</strain>
    </source>
</reference>
<reference key="2">
    <citation type="journal article" date="2003" name="Infect. Immun.">
        <title>Complete genome sequence and comparative genomics of Shigella flexneri serotype 2a strain 2457T.</title>
        <authorList>
            <person name="Wei J."/>
            <person name="Goldberg M.B."/>
            <person name="Burland V."/>
            <person name="Venkatesan M.M."/>
            <person name="Deng W."/>
            <person name="Fournier G."/>
            <person name="Mayhew G.F."/>
            <person name="Plunkett G. III"/>
            <person name="Rose D.J."/>
            <person name="Darling A."/>
            <person name="Mau B."/>
            <person name="Perna N.T."/>
            <person name="Payne S.M."/>
            <person name="Runyen-Janecky L.J."/>
            <person name="Zhou S."/>
            <person name="Schwartz D.C."/>
            <person name="Blattner F.R."/>
        </authorList>
    </citation>
    <scope>NUCLEOTIDE SEQUENCE [LARGE SCALE GENOMIC DNA]</scope>
    <source>
        <strain>ATCC 700930 / 2457T / Serotype 2a</strain>
    </source>
</reference>
<dbReference type="EC" id="1.1.1.38" evidence="1"/>
<dbReference type="EMBL" id="AE005674">
    <property type="protein sequence ID" value="AAN43318.2"/>
    <property type="molecule type" value="Genomic_DNA"/>
</dbReference>
<dbReference type="EMBL" id="AE014073">
    <property type="protein sequence ID" value="AAP17204.1"/>
    <property type="molecule type" value="Genomic_DNA"/>
</dbReference>
<dbReference type="RefSeq" id="WP_000433464.1">
    <property type="nucleotide sequence ID" value="NZ_WPGW01000120.1"/>
</dbReference>
<dbReference type="SMR" id="Q83ML6"/>
<dbReference type="STRING" id="198214.SF1746"/>
<dbReference type="PaxDb" id="198214-SF1746"/>
<dbReference type="GeneID" id="93775638"/>
<dbReference type="KEGG" id="sfl:SF1746"/>
<dbReference type="KEGG" id="sfx:S1879"/>
<dbReference type="PATRIC" id="fig|198214.7.peg.2069"/>
<dbReference type="HOGENOM" id="CLU_011405_5_2_6"/>
<dbReference type="Proteomes" id="UP000001006">
    <property type="component" value="Chromosome"/>
</dbReference>
<dbReference type="Proteomes" id="UP000002673">
    <property type="component" value="Chromosome"/>
</dbReference>
<dbReference type="GO" id="GO:0005829">
    <property type="term" value="C:cytosol"/>
    <property type="evidence" value="ECO:0007669"/>
    <property type="project" value="TreeGrafter"/>
</dbReference>
<dbReference type="GO" id="GO:0004471">
    <property type="term" value="F:malate dehydrogenase (decarboxylating) (NAD+) activity"/>
    <property type="evidence" value="ECO:0007669"/>
    <property type="project" value="UniProtKB-UniRule"/>
</dbReference>
<dbReference type="GO" id="GO:0046872">
    <property type="term" value="F:metal ion binding"/>
    <property type="evidence" value="ECO:0007669"/>
    <property type="project" value="UniProtKB-KW"/>
</dbReference>
<dbReference type="GO" id="GO:0051287">
    <property type="term" value="F:NAD binding"/>
    <property type="evidence" value="ECO:0007669"/>
    <property type="project" value="InterPro"/>
</dbReference>
<dbReference type="GO" id="GO:0008948">
    <property type="term" value="F:oxaloacetate decarboxylase activity"/>
    <property type="evidence" value="ECO:0007669"/>
    <property type="project" value="UniProtKB-UniRule"/>
</dbReference>
<dbReference type="GO" id="GO:0006108">
    <property type="term" value="P:malate metabolic process"/>
    <property type="evidence" value="ECO:0007669"/>
    <property type="project" value="TreeGrafter"/>
</dbReference>
<dbReference type="CDD" id="cd05312">
    <property type="entry name" value="NAD_bind_1_malic_enz"/>
    <property type="match status" value="1"/>
</dbReference>
<dbReference type="FunFam" id="3.40.50.10380:FF:000001">
    <property type="entry name" value="NAD-dependent malic enzyme"/>
    <property type="match status" value="1"/>
</dbReference>
<dbReference type="FunFam" id="3.40.50.720:FF:000055">
    <property type="entry name" value="NAD-dependent malic enzyme"/>
    <property type="match status" value="1"/>
</dbReference>
<dbReference type="Gene3D" id="3.40.50.10380">
    <property type="entry name" value="Malic enzyme, N-terminal domain"/>
    <property type="match status" value="1"/>
</dbReference>
<dbReference type="Gene3D" id="3.40.50.720">
    <property type="entry name" value="NAD(P)-binding Rossmann-like Domain"/>
    <property type="match status" value="1"/>
</dbReference>
<dbReference type="HAMAP" id="MF_01619">
    <property type="entry name" value="NAD_malic_enz"/>
    <property type="match status" value="1"/>
</dbReference>
<dbReference type="InterPro" id="IPR046346">
    <property type="entry name" value="Aminoacid_DH-like_N_sf"/>
</dbReference>
<dbReference type="InterPro" id="IPR015884">
    <property type="entry name" value="Malic_enzyme_CS"/>
</dbReference>
<dbReference type="InterPro" id="IPR012301">
    <property type="entry name" value="Malic_N_dom"/>
</dbReference>
<dbReference type="InterPro" id="IPR037062">
    <property type="entry name" value="Malic_N_dom_sf"/>
</dbReference>
<dbReference type="InterPro" id="IPR012302">
    <property type="entry name" value="Malic_NAD-bd"/>
</dbReference>
<dbReference type="InterPro" id="IPR001891">
    <property type="entry name" value="Malic_OxRdtase"/>
</dbReference>
<dbReference type="InterPro" id="IPR036291">
    <property type="entry name" value="NAD(P)-bd_dom_sf"/>
</dbReference>
<dbReference type="InterPro" id="IPR023667">
    <property type="entry name" value="NAD_malic_enz_proteobac"/>
</dbReference>
<dbReference type="NCBIfam" id="NF010052">
    <property type="entry name" value="PRK13529.1"/>
    <property type="match status" value="1"/>
</dbReference>
<dbReference type="PANTHER" id="PTHR23406">
    <property type="entry name" value="MALIC ENZYME-RELATED"/>
    <property type="match status" value="1"/>
</dbReference>
<dbReference type="PANTHER" id="PTHR23406:SF34">
    <property type="entry name" value="NAD-DEPENDENT MALIC ENZYME, MITOCHONDRIAL"/>
    <property type="match status" value="1"/>
</dbReference>
<dbReference type="Pfam" id="PF00390">
    <property type="entry name" value="malic"/>
    <property type="match status" value="1"/>
</dbReference>
<dbReference type="Pfam" id="PF03949">
    <property type="entry name" value="Malic_M"/>
    <property type="match status" value="1"/>
</dbReference>
<dbReference type="PIRSF" id="PIRSF000106">
    <property type="entry name" value="ME"/>
    <property type="match status" value="1"/>
</dbReference>
<dbReference type="PRINTS" id="PR00072">
    <property type="entry name" value="MALOXRDTASE"/>
</dbReference>
<dbReference type="SMART" id="SM01274">
    <property type="entry name" value="malic"/>
    <property type="match status" value="1"/>
</dbReference>
<dbReference type="SMART" id="SM00919">
    <property type="entry name" value="Malic_M"/>
    <property type="match status" value="1"/>
</dbReference>
<dbReference type="SUPFAM" id="SSF53223">
    <property type="entry name" value="Aminoacid dehydrogenase-like, N-terminal domain"/>
    <property type="match status" value="1"/>
</dbReference>
<dbReference type="SUPFAM" id="SSF51735">
    <property type="entry name" value="NAD(P)-binding Rossmann-fold domains"/>
    <property type="match status" value="1"/>
</dbReference>
<dbReference type="PROSITE" id="PS00331">
    <property type="entry name" value="MALIC_ENZYMES"/>
    <property type="match status" value="1"/>
</dbReference>
<feature type="chain" id="PRO_0000160233" description="NAD-dependent malic enzyme">
    <location>
        <begin position="1"/>
        <end position="565"/>
    </location>
</feature>
<feature type="active site" description="Proton donor" evidence="1">
    <location>
        <position position="104"/>
    </location>
</feature>
<feature type="active site" description="Proton acceptor" evidence="1">
    <location>
        <position position="175"/>
    </location>
</feature>
<feature type="binding site" evidence="1">
    <location>
        <position position="157"/>
    </location>
    <ligand>
        <name>NAD(+)</name>
        <dbReference type="ChEBI" id="CHEBI:57540"/>
    </ligand>
</feature>
<feature type="binding site" evidence="1">
    <location>
        <position position="246"/>
    </location>
    <ligand>
        <name>a divalent metal cation</name>
        <dbReference type="ChEBI" id="CHEBI:60240"/>
    </ligand>
</feature>
<feature type="binding site" evidence="1">
    <location>
        <position position="247"/>
    </location>
    <ligand>
        <name>a divalent metal cation</name>
        <dbReference type="ChEBI" id="CHEBI:60240"/>
    </ligand>
</feature>
<feature type="binding site" evidence="1">
    <location>
        <position position="270"/>
    </location>
    <ligand>
        <name>a divalent metal cation</name>
        <dbReference type="ChEBI" id="CHEBI:60240"/>
    </ligand>
</feature>
<feature type="binding site" evidence="1">
    <location>
        <position position="270"/>
    </location>
    <ligand>
        <name>NAD(+)</name>
        <dbReference type="ChEBI" id="CHEBI:57540"/>
    </ligand>
</feature>
<feature type="binding site" evidence="1">
    <location>
        <position position="418"/>
    </location>
    <ligand>
        <name>NAD(+)</name>
        <dbReference type="ChEBI" id="CHEBI:57540"/>
    </ligand>
</feature>
<feature type="site" description="Important for activity" evidence="1">
    <location>
        <position position="270"/>
    </location>
</feature>
<name>MAO1_SHIFL</name>
<organism>
    <name type="scientific">Shigella flexneri</name>
    <dbReference type="NCBI Taxonomy" id="623"/>
    <lineage>
        <taxon>Bacteria</taxon>
        <taxon>Pseudomonadati</taxon>
        <taxon>Pseudomonadota</taxon>
        <taxon>Gammaproteobacteria</taxon>
        <taxon>Enterobacterales</taxon>
        <taxon>Enterobacteriaceae</taxon>
        <taxon>Shigella</taxon>
    </lineage>
</organism>
<accession>Q83ML6</accession>
<accession>Q7UAG7</accession>
<keyword id="KW-0479">Metal-binding</keyword>
<keyword id="KW-0520">NAD</keyword>
<keyword id="KW-0560">Oxidoreductase</keyword>
<keyword id="KW-1185">Reference proteome</keyword>